<protein>
    <recommendedName>
        <fullName evidence="1">Small ribosomal subunit protein bS21</fullName>
    </recommendedName>
    <alternativeName>
        <fullName evidence="2">30S ribosomal protein S21</fullName>
    </alternativeName>
</protein>
<name>RS21_BRUME</name>
<comment type="similarity">
    <text evidence="1">Belongs to the bacterial ribosomal protein bS21 family.</text>
</comment>
<reference key="1">
    <citation type="journal article" date="2002" name="Proc. Natl. Acad. Sci. U.S.A.">
        <title>The genome sequence of the facultative intracellular pathogen Brucella melitensis.</title>
        <authorList>
            <person name="DelVecchio V.G."/>
            <person name="Kapatral V."/>
            <person name="Redkar R.J."/>
            <person name="Patra G."/>
            <person name="Mujer C."/>
            <person name="Los T."/>
            <person name="Ivanova N."/>
            <person name="Anderson I."/>
            <person name="Bhattacharyya A."/>
            <person name="Lykidis A."/>
            <person name="Reznik G."/>
            <person name="Jablonski L."/>
            <person name="Larsen N."/>
            <person name="D'Souza M."/>
            <person name="Bernal A."/>
            <person name="Mazur M."/>
            <person name="Goltsman E."/>
            <person name="Selkov E."/>
            <person name="Elzer P.H."/>
            <person name="Hagius S."/>
            <person name="O'Callaghan D."/>
            <person name="Letesson J.-J."/>
            <person name="Haselkorn R."/>
            <person name="Kyrpides N.C."/>
            <person name="Overbeek R."/>
        </authorList>
    </citation>
    <scope>NUCLEOTIDE SEQUENCE [LARGE SCALE GENOMIC DNA]</scope>
    <source>
        <strain>ATCC 23456 / CCUG 17765 / NCTC 10094 / 16M</strain>
    </source>
</reference>
<organism>
    <name type="scientific">Brucella melitensis biotype 1 (strain ATCC 23456 / CCUG 17765 / NCTC 10094 / 16M)</name>
    <dbReference type="NCBI Taxonomy" id="224914"/>
    <lineage>
        <taxon>Bacteria</taxon>
        <taxon>Pseudomonadati</taxon>
        <taxon>Pseudomonadota</taxon>
        <taxon>Alphaproteobacteria</taxon>
        <taxon>Hyphomicrobiales</taxon>
        <taxon>Brucellaceae</taxon>
        <taxon>Brucella/Ochrobactrum group</taxon>
        <taxon>Brucella</taxon>
    </lineage>
</organism>
<evidence type="ECO:0000255" key="1">
    <source>
        <dbReference type="HAMAP-Rule" id="MF_00358"/>
    </source>
</evidence>
<evidence type="ECO:0000305" key="2"/>
<proteinExistence type="inferred from homology"/>
<sequence>MQVLVRDNNVDQALRALKKKMQREGIFREMKMRGHYEKPSEKRAREKAEAVRRARKLARKRAQREGLIGGRTGAR</sequence>
<gene>
    <name evidence="1" type="primary">rpsU</name>
    <name type="ordered locus">BMEII0332</name>
</gene>
<dbReference type="EMBL" id="AE008918">
    <property type="protein sequence ID" value="AAL53574.1"/>
    <property type="molecule type" value="Genomic_DNA"/>
</dbReference>
<dbReference type="PIR" id="AC3551">
    <property type="entry name" value="AC3551"/>
</dbReference>
<dbReference type="RefSeq" id="WP_002965682.1">
    <property type="nucleotide sequence ID" value="NZ_GG703779.1"/>
</dbReference>
<dbReference type="SMR" id="P66514"/>
<dbReference type="GeneID" id="97533017"/>
<dbReference type="KEGG" id="bme:BMEII0332"/>
<dbReference type="eggNOG" id="COG0828">
    <property type="taxonomic scope" value="Bacteria"/>
</dbReference>
<dbReference type="Proteomes" id="UP000000419">
    <property type="component" value="Chromosome II"/>
</dbReference>
<dbReference type="GO" id="GO:1990904">
    <property type="term" value="C:ribonucleoprotein complex"/>
    <property type="evidence" value="ECO:0007669"/>
    <property type="project" value="UniProtKB-KW"/>
</dbReference>
<dbReference type="GO" id="GO:0005840">
    <property type="term" value="C:ribosome"/>
    <property type="evidence" value="ECO:0007669"/>
    <property type="project" value="UniProtKB-KW"/>
</dbReference>
<dbReference type="GO" id="GO:0003735">
    <property type="term" value="F:structural constituent of ribosome"/>
    <property type="evidence" value="ECO:0007669"/>
    <property type="project" value="InterPro"/>
</dbReference>
<dbReference type="GO" id="GO:0006412">
    <property type="term" value="P:translation"/>
    <property type="evidence" value="ECO:0007669"/>
    <property type="project" value="UniProtKB-UniRule"/>
</dbReference>
<dbReference type="Gene3D" id="1.20.5.1150">
    <property type="entry name" value="Ribosomal protein S8"/>
    <property type="match status" value="1"/>
</dbReference>
<dbReference type="HAMAP" id="MF_00358">
    <property type="entry name" value="Ribosomal_bS21"/>
    <property type="match status" value="1"/>
</dbReference>
<dbReference type="InterPro" id="IPR001911">
    <property type="entry name" value="Ribosomal_bS21"/>
</dbReference>
<dbReference type="InterPro" id="IPR018278">
    <property type="entry name" value="Ribosomal_bS21_CS"/>
</dbReference>
<dbReference type="InterPro" id="IPR038380">
    <property type="entry name" value="Ribosomal_bS21_sf"/>
</dbReference>
<dbReference type="NCBIfam" id="TIGR00030">
    <property type="entry name" value="S21p"/>
    <property type="match status" value="1"/>
</dbReference>
<dbReference type="PANTHER" id="PTHR21109">
    <property type="entry name" value="MITOCHONDRIAL 28S RIBOSOMAL PROTEIN S21"/>
    <property type="match status" value="1"/>
</dbReference>
<dbReference type="PANTHER" id="PTHR21109:SF0">
    <property type="entry name" value="SMALL RIBOSOMAL SUBUNIT PROTEIN BS21M"/>
    <property type="match status" value="1"/>
</dbReference>
<dbReference type="Pfam" id="PF01165">
    <property type="entry name" value="Ribosomal_S21"/>
    <property type="match status" value="1"/>
</dbReference>
<dbReference type="PRINTS" id="PR00976">
    <property type="entry name" value="RIBOSOMALS21"/>
</dbReference>
<dbReference type="PROSITE" id="PS01181">
    <property type="entry name" value="RIBOSOMAL_S21"/>
    <property type="match status" value="1"/>
</dbReference>
<feature type="chain" id="PRO_0000178310" description="Small ribosomal subunit protein bS21">
    <location>
        <begin position="1"/>
        <end position="75"/>
    </location>
</feature>
<keyword id="KW-0687">Ribonucleoprotein</keyword>
<keyword id="KW-0689">Ribosomal protein</keyword>
<accession>P66514</accession>
<accession>Q8YD45</accession>